<evidence type="ECO:0000255" key="1">
    <source>
        <dbReference type="HAMAP-Rule" id="MF_00375"/>
    </source>
</evidence>
<sequence length="437" mass="47718">MPVIDESTMTYAEACRYFPGGVNSPIRACLPVRIVPPIVSSACRDIFIDSFGNNFIDFCGSWGSLIHGHSHPKILDAICNAASHGTSYGLTSENEISLASTLFSCLDLEDYKLRFVSSGTEATMTAVRLACGVTKCSIIVKFLGCYHGHADVLLKGISVDENNLQNVAHIVDTYFAGQPCLPLTLILPYNDVMIFEEVMHQIGERVACVIFEPICINMGVILPKHGFIESILAMCRRYSALSIMDEVVTGFRMGIRGMRSIMDVTADITVYGKILGGGMPVAALLAHQNIMDHLLPLGTVFQAGTLSGNPVAMAAGKASIELCCEPNFYSKLENLTEGFLSPIEEIIRSKGFPVSLVRSGSMFSFFFRDTPPANLSEVQQCDQERFGLFYRQAFSLGVYLSPASTEASFISSVHSRENLAYTQNVLIDSLVKSFDNV</sequence>
<dbReference type="EC" id="5.4.3.8" evidence="1"/>
<dbReference type="EMBL" id="AP006861">
    <property type="protein sequence ID" value="BAE81146.1"/>
    <property type="molecule type" value="Genomic_DNA"/>
</dbReference>
<dbReference type="RefSeq" id="WP_011457926.1">
    <property type="nucleotide sequence ID" value="NC_007899.1"/>
</dbReference>
<dbReference type="SMR" id="Q254Z2"/>
<dbReference type="STRING" id="264202.CF0374"/>
<dbReference type="KEGG" id="cfe:CF0374"/>
<dbReference type="eggNOG" id="COG0001">
    <property type="taxonomic scope" value="Bacteria"/>
</dbReference>
<dbReference type="HOGENOM" id="CLU_016922_1_5_0"/>
<dbReference type="OrthoDB" id="9807885at2"/>
<dbReference type="UniPathway" id="UPA00251">
    <property type="reaction ID" value="UER00317"/>
</dbReference>
<dbReference type="Proteomes" id="UP000001260">
    <property type="component" value="Chromosome"/>
</dbReference>
<dbReference type="GO" id="GO:0005737">
    <property type="term" value="C:cytoplasm"/>
    <property type="evidence" value="ECO:0007669"/>
    <property type="project" value="UniProtKB-SubCell"/>
</dbReference>
<dbReference type="GO" id="GO:0042286">
    <property type="term" value="F:glutamate-1-semialdehyde 2,1-aminomutase activity"/>
    <property type="evidence" value="ECO:0007669"/>
    <property type="project" value="UniProtKB-UniRule"/>
</dbReference>
<dbReference type="GO" id="GO:0030170">
    <property type="term" value="F:pyridoxal phosphate binding"/>
    <property type="evidence" value="ECO:0007669"/>
    <property type="project" value="InterPro"/>
</dbReference>
<dbReference type="GO" id="GO:0008483">
    <property type="term" value="F:transaminase activity"/>
    <property type="evidence" value="ECO:0007669"/>
    <property type="project" value="InterPro"/>
</dbReference>
<dbReference type="GO" id="GO:0006782">
    <property type="term" value="P:protoporphyrinogen IX biosynthetic process"/>
    <property type="evidence" value="ECO:0007669"/>
    <property type="project" value="UniProtKB-UniRule"/>
</dbReference>
<dbReference type="CDD" id="cd00610">
    <property type="entry name" value="OAT_like"/>
    <property type="match status" value="1"/>
</dbReference>
<dbReference type="Gene3D" id="3.90.1150.10">
    <property type="entry name" value="Aspartate Aminotransferase, domain 1"/>
    <property type="match status" value="1"/>
</dbReference>
<dbReference type="Gene3D" id="3.40.640.10">
    <property type="entry name" value="Type I PLP-dependent aspartate aminotransferase-like (Major domain)"/>
    <property type="match status" value="1"/>
</dbReference>
<dbReference type="HAMAP" id="MF_00375">
    <property type="entry name" value="HemL_aminotrans_3"/>
    <property type="match status" value="1"/>
</dbReference>
<dbReference type="InterPro" id="IPR004639">
    <property type="entry name" value="4pyrrol_synth_GluAld_NH2Trfase"/>
</dbReference>
<dbReference type="InterPro" id="IPR005814">
    <property type="entry name" value="Aminotrans_3"/>
</dbReference>
<dbReference type="InterPro" id="IPR049704">
    <property type="entry name" value="Aminotrans_3_PPA_site"/>
</dbReference>
<dbReference type="InterPro" id="IPR015424">
    <property type="entry name" value="PyrdxlP-dep_Trfase"/>
</dbReference>
<dbReference type="InterPro" id="IPR015421">
    <property type="entry name" value="PyrdxlP-dep_Trfase_major"/>
</dbReference>
<dbReference type="InterPro" id="IPR015422">
    <property type="entry name" value="PyrdxlP-dep_Trfase_small"/>
</dbReference>
<dbReference type="NCBIfam" id="NF000818">
    <property type="entry name" value="PRK00062.1"/>
    <property type="match status" value="1"/>
</dbReference>
<dbReference type="NCBIfam" id="NF001864">
    <property type="entry name" value="PRK00615.1"/>
    <property type="match status" value="1"/>
</dbReference>
<dbReference type="PANTHER" id="PTHR43713">
    <property type="entry name" value="GLUTAMATE-1-SEMIALDEHYDE 2,1-AMINOMUTASE"/>
    <property type="match status" value="1"/>
</dbReference>
<dbReference type="PANTHER" id="PTHR43713:SF3">
    <property type="entry name" value="GLUTAMATE-1-SEMIALDEHYDE 2,1-AMINOMUTASE 1, CHLOROPLASTIC-RELATED"/>
    <property type="match status" value="1"/>
</dbReference>
<dbReference type="Pfam" id="PF00202">
    <property type="entry name" value="Aminotran_3"/>
    <property type="match status" value="1"/>
</dbReference>
<dbReference type="SUPFAM" id="SSF53383">
    <property type="entry name" value="PLP-dependent transferases"/>
    <property type="match status" value="1"/>
</dbReference>
<dbReference type="PROSITE" id="PS00600">
    <property type="entry name" value="AA_TRANSFER_CLASS_3"/>
    <property type="match status" value="1"/>
</dbReference>
<name>GSA_CHLFF</name>
<feature type="chain" id="PRO_0000382293" description="Glutamate-1-semialdehyde 2,1-aminomutase">
    <location>
        <begin position="1"/>
        <end position="437"/>
    </location>
</feature>
<feature type="modified residue" description="N6-(pyridoxal phosphate)lysine" evidence="1">
    <location>
        <position position="273"/>
    </location>
</feature>
<protein>
    <recommendedName>
        <fullName evidence="1">Glutamate-1-semialdehyde 2,1-aminomutase</fullName>
        <shortName evidence="1">GSA</shortName>
        <ecNumber evidence="1">5.4.3.8</ecNumber>
    </recommendedName>
    <alternativeName>
        <fullName evidence="1">Glutamate-1-semialdehyde aminotransferase</fullName>
        <shortName evidence="1">GSA-AT</shortName>
    </alternativeName>
</protein>
<comment type="catalytic activity">
    <reaction evidence="1">
        <text>(S)-4-amino-5-oxopentanoate = 5-aminolevulinate</text>
        <dbReference type="Rhea" id="RHEA:14265"/>
        <dbReference type="ChEBI" id="CHEBI:57501"/>
        <dbReference type="ChEBI" id="CHEBI:356416"/>
        <dbReference type="EC" id="5.4.3.8"/>
    </reaction>
</comment>
<comment type="cofactor">
    <cofactor evidence="1">
        <name>pyridoxal 5'-phosphate</name>
        <dbReference type="ChEBI" id="CHEBI:597326"/>
    </cofactor>
</comment>
<comment type="pathway">
    <text evidence="1">Porphyrin-containing compound metabolism; protoporphyrin-IX biosynthesis; 5-aminolevulinate from L-glutamyl-tRNA(Glu): step 2/2.</text>
</comment>
<comment type="subunit">
    <text evidence="1">Homodimer.</text>
</comment>
<comment type="subcellular location">
    <subcellularLocation>
        <location evidence="1">Cytoplasm</location>
    </subcellularLocation>
</comment>
<comment type="similarity">
    <text evidence="1">Belongs to the class-III pyridoxal-phosphate-dependent aminotransferase family. HemL subfamily.</text>
</comment>
<reference key="1">
    <citation type="journal article" date="2006" name="DNA Res.">
        <title>Genome sequence of the cat pathogen, Chlamydophila felis.</title>
        <authorList>
            <person name="Azuma Y."/>
            <person name="Hirakawa H."/>
            <person name="Yamashita A."/>
            <person name="Cai Y."/>
            <person name="Rahman M.A."/>
            <person name="Suzuki H."/>
            <person name="Mitaku S."/>
            <person name="Toh H."/>
            <person name="Goto S."/>
            <person name="Murakami T."/>
            <person name="Sugi K."/>
            <person name="Hayashi H."/>
            <person name="Fukushi H."/>
            <person name="Hattori M."/>
            <person name="Kuhara S."/>
            <person name="Shirai M."/>
        </authorList>
    </citation>
    <scope>NUCLEOTIDE SEQUENCE [LARGE SCALE GENOMIC DNA]</scope>
    <source>
        <strain>Fe/C-56</strain>
    </source>
</reference>
<accession>Q254Z2</accession>
<gene>
    <name evidence="1" type="primary">hemL</name>
    <name type="ordered locus">CF0374</name>
</gene>
<organism>
    <name type="scientific">Chlamydia felis (strain Fe/C-56)</name>
    <name type="common">Chlamydophila felis</name>
    <dbReference type="NCBI Taxonomy" id="264202"/>
    <lineage>
        <taxon>Bacteria</taxon>
        <taxon>Pseudomonadati</taxon>
        <taxon>Chlamydiota</taxon>
        <taxon>Chlamydiia</taxon>
        <taxon>Chlamydiales</taxon>
        <taxon>Chlamydiaceae</taxon>
        <taxon>Chlamydia/Chlamydophila group</taxon>
        <taxon>Chlamydia</taxon>
    </lineage>
</organism>
<keyword id="KW-0963">Cytoplasm</keyword>
<keyword id="KW-0413">Isomerase</keyword>
<keyword id="KW-0627">Porphyrin biosynthesis</keyword>
<keyword id="KW-0663">Pyridoxal phosphate</keyword>
<proteinExistence type="inferred from homology"/>